<name>RNC_ECOLC</name>
<protein>
    <recommendedName>
        <fullName evidence="1">Ribonuclease 3</fullName>
        <ecNumber evidence="1">3.1.26.3</ecNumber>
    </recommendedName>
    <alternativeName>
        <fullName evidence="1">Ribonuclease III</fullName>
        <shortName evidence="1">RNase III</shortName>
    </alternativeName>
</protein>
<gene>
    <name evidence="1" type="primary">rnc</name>
    <name type="ordered locus">EcolC_1110</name>
</gene>
<accession>B1IVR0</accession>
<comment type="function">
    <text evidence="1">Digests double-stranded RNA. Involved in the processing of primary rRNA transcript to yield the immediate precursors to the large and small rRNAs (23S and 16S). Processes some mRNAs, and tRNAs when they are encoded in the rRNA operon. Processes pre-crRNA and tracrRNA of type II CRISPR loci if present in the organism.</text>
</comment>
<comment type="catalytic activity">
    <reaction evidence="1">
        <text>Endonucleolytic cleavage to 5'-phosphomonoester.</text>
        <dbReference type="EC" id="3.1.26.3"/>
    </reaction>
</comment>
<comment type="cofactor">
    <cofactor evidence="1">
        <name>Mg(2+)</name>
        <dbReference type="ChEBI" id="CHEBI:18420"/>
    </cofactor>
</comment>
<comment type="subunit">
    <text evidence="1">Homodimer.</text>
</comment>
<comment type="subcellular location">
    <subcellularLocation>
        <location evidence="1">Cytoplasm</location>
    </subcellularLocation>
</comment>
<comment type="similarity">
    <text evidence="1">Belongs to the ribonuclease III family.</text>
</comment>
<proteinExistence type="inferred from homology"/>
<sequence>MNPIVINRLQRKLGYTFNHQELLQQALTHRSASSKHNERLEFLGDSILSYVIANALYHRFPRVDEGDMSRMRATLVRGNTLAELAREFELGECLRLGPGELKSGGFRRESILADTVEALIGGVFLDSDIQTVEKLILNWYQTRLDEISPGDKQKDPKTRLQEYLQGRHLPLPTYLVVQVRGEAHDQEFTIHCQVSGLSEPVVGTGSSRRKAEQAAAEQALKKLELE</sequence>
<dbReference type="EC" id="3.1.26.3" evidence="1"/>
<dbReference type="EMBL" id="CP000946">
    <property type="protein sequence ID" value="ACA76777.1"/>
    <property type="molecule type" value="Genomic_DNA"/>
</dbReference>
<dbReference type="RefSeq" id="WP_001068343.1">
    <property type="nucleotide sequence ID" value="NZ_MTFT01000002.1"/>
</dbReference>
<dbReference type="SMR" id="B1IVR0"/>
<dbReference type="GeneID" id="93774524"/>
<dbReference type="KEGG" id="ecl:EcolC_1110"/>
<dbReference type="HOGENOM" id="CLU_000907_1_1_6"/>
<dbReference type="GO" id="GO:0005737">
    <property type="term" value="C:cytoplasm"/>
    <property type="evidence" value="ECO:0007669"/>
    <property type="project" value="UniProtKB-SubCell"/>
</dbReference>
<dbReference type="GO" id="GO:0003725">
    <property type="term" value="F:double-stranded RNA binding"/>
    <property type="evidence" value="ECO:0007669"/>
    <property type="project" value="TreeGrafter"/>
</dbReference>
<dbReference type="GO" id="GO:0046872">
    <property type="term" value="F:metal ion binding"/>
    <property type="evidence" value="ECO:0007669"/>
    <property type="project" value="UniProtKB-KW"/>
</dbReference>
<dbReference type="GO" id="GO:0004525">
    <property type="term" value="F:ribonuclease III activity"/>
    <property type="evidence" value="ECO:0007669"/>
    <property type="project" value="UniProtKB-UniRule"/>
</dbReference>
<dbReference type="GO" id="GO:0019843">
    <property type="term" value="F:rRNA binding"/>
    <property type="evidence" value="ECO:0007669"/>
    <property type="project" value="UniProtKB-KW"/>
</dbReference>
<dbReference type="GO" id="GO:0006397">
    <property type="term" value="P:mRNA processing"/>
    <property type="evidence" value="ECO:0007669"/>
    <property type="project" value="UniProtKB-UniRule"/>
</dbReference>
<dbReference type="GO" id="GO:0010468">
    <property type="term" value="P:regulation of gene expression"/>
    <property type="evidence" value="ECO:0007669"/>
    <property type="project" value="TreeGrafter"/>
</dbReference>
<dbReference type="GO" id="GO:0006364">
    <property type="term" value="P:rRNA processing"/>
    <property type="evidence" value="ECO:0007669"/>
    <property type="project" value="UniProtKB-UniRule"/>
</dbReference>
<dbReference type="GO" id="GO:0008033">
    <property type="term" value="P:tRNA processing"/>
    <property type="evidence" value="ECO:0007669"/>
    <property type="project" value="UniProtKB-KW"/>
</dbReference>
<dbReference type="CDD" id="cd10845">
    <property type="entry name" value="DSRM_RNAse_III_family"/>
    <property type="match status" value="1"/>
</dbReference>
<dbReference type="CDD" id="cd00593">
    <property type="entry name" value="RIBOc"/>
    <property type="match status" value="1"/>
</dbReference>
<dbReference type="FunFam" id="1.10.1520.10:FF:000001">
    <property type="entry name" value="Ribonuclease 3"/>
    <property type="match status" value="1"/>
</dbReference>
<dbReference type="FunFam" id="3.30.160.20:FF:000003">
    <property type="entry name" value="Ribonuclease 3"/>
    <property type="match status" value="1"/>
</dbReference>
<dbReference type="Gene3D" id="3.30.160.20">
    <property type="match status" value="1"/>
</dbReference>
<dbReference type="Gene3D" id="1.10.1520.10">
    <property type="entry name" value="Ribonuclease III domain"/>
    <property type="match status" value="1"/>
</dbReference>
<dbReference type="HAMAP" id="MF_00104">
    <property type="entry name" value="RNase_III"/>
    <property type="match status" value="1"/>
</dbReference>
<dbReference type="InterPro" id="IPR014720">
    <property type="entry name" value="dsRBD_dom"/>
</dbReference>
<dbReference type="InterPro" id="IPR011907">
    <property type="entry name" value="RNase_III"/>
</dbReference>
<dbReference type="InterPro" id="IPR000999">
    <property type="entry name" value="RNase_III_dom"/>
</dbReference>
<dbReference type="InterPro" id="IPR036389">
    <property type="entry name" value="RNase_III_sf"/>
</dbReference>
<dbReference type="NCBIfam" id="TIGR02191">
    <property type="entry name" value="RNaseIII"/>
    <property type="match status" value="1"/>
</dbReference>
<dbReference type="PANTHER" id="PTHR11207:SF0">
    <property type="entry name" value="RIBONUCLEASE 3"/>
    <property type="match status" value="1"/>
</dbReference>
<dbReference type="PANTHER" id="PTHR11207">
    <property type="entry name" value="RIBONUCLEASE III"/>
    <property type="match status" value="1"/>
</dbReference>
<dbReference type="Pfam" id="PF00035">
    <property type="entry name" value="dsrm"/>
    <property type="match status" value="1"/>
</dbReference>
<dbReference type="Pfam" id="PF14622">
    <property type="entry name" value="Ribonucleas_3_3"/>
    <property type="match status" value="1"/>
</dbReference>
<dbReference type="SMART" id="SM00358">
    <property type="entry name" value="DSRM"/>
    <property type="match status" value="1"/>
</dbReference>
<dbReference type="SMART" id="SM00535">
    <property type="entry name" value="RIBOc"/>
    <property type="match status" value="1"/>
</dbReference>
<dbReference type="SUPFAM" id="SSF54768">
    <property type="entry name" value="dsRNA-binding domain-like"/>
    <property type="match status" value="1"/>
</dbReference>
<dbReference type="SUPFAM" id="SSF69065">
    <property type="entry name" value="RNase III domain-like"/>
    <property type="match status" value="1"/>
</dbReference>
<dbReference type="PROSITE" id="PS50137">
    <property type="entry name" value="DS_RBD"/>
    <property type="match status" value="1"/>
</dbReference>
<dbReference type="PROSITE" id="PS00517">
    <property type="entry name" value="RNASE_3_1"/>
    <property type="match status" value="1"/>
</dbReference>
<dbReference type="PROSITE" id="PS50142">
    <property type="entry name" value="RNASE_3_2"/>
    <property type="match status" value="1"/>
</dbReference>
<reference key="1">
    <citation type="submission" date="2008-02" db="EMBL/GenBank/DDBJ databases">
        <title>Complete sequence of Escherichia coli C str. ATCC 8739.</title>
        <authorList>
            <person name="Copeland A."/>
            <person name="Lucas S."/>
            <person name="Lapidus A."/>
            <person name="Glavina del Rio T."/>
            <person name="Dalin E."/>
            <person name="Tice H."/>
            <person name="Bruce D."/>
            <person name="Goodwin L."/>
            <person name="Pitluck S."/>
            <person name="Kiss H."/>
            <person name="Brettin T."/>
            <person name="Detter J.C."/>
            <person name="Han C."/>
            <person name="Kuske C.R."/>
            <person name="Schmutz J."/>
            <person name="Larimer F."/>
            <person name="Land M."/>
            <person name="Hauser L."/>
            <person name="Kyrpides N."/>
            <person name="Mikhailova N."/>
            <person name="Ingram L."/>
            <person name="Richardson P."/>
        </authorList>
    </citation>
    <scope>NUCLEOTIDE SEQUENCE [LARGE SCALE GENOMIC DNA]</scope>
    <source>
        <strain>ATCC 8739 / DSM 1576 / NBRC 3972 / NCIMB 8545 / WDCM 00012 / Crooks</strain>
    </source>
</reference>
<organism>
    <name type="scientific">Escherichia coli (strain ATCC 8739 / DSM 1576 / NBRC 3972 / NCIMB 8545 / WDCM 00012 / Crooks)</name>
    <dbReference type="NCBI Taxonomy" id="481805"/>
    <lineage>
        <taxon>Bacteria</taxon>
        <taxon>Pseudomonadati</taxon>
        <taxon>Pseudomonadota</taxon>
        <taxon>Gammaproteobacteria</taxon>
        <taxon>Enterobacterales</taxon>
        <taxon>Enterobacteriaceae</taxon>
        <taxon>Escherichia</taxon>
    </lineage>
</organism>
<evidence type="ECO:0000255" key="1">
    <source>
        <dbReference type="HAMAP-Rule" id="MF_00104"/>
    </source>
</evidence>
<keyword id="KW-0963">Cytoplasm</keyword>
<keyword id="KW-0255">Endonuclease</keyword>
<keyword id="KW-0378">Hydrolase</keyword>
<keyword id="KW-0460">Magnesium</keyword>
<keyword id="KW-0479">Metal-binding</keyword>
<keyword id="KW-0507">mRNA processing</keyword>
<keyword id="KW-0540">Nuclease</keyword>
<keyword id="KW-0694">RNA-binding</keyword>
<keyword id="KW-0698">rRNA processing</keyword>
<keyword id="KW-0699">rRNA-binding</keyword>
<keyword id="KW-0819">tRNA processing</keyword>
<feature type="chain" id="PRO_1000075749" description="Ribonuclease 3">
    <location>
        <begin position="1"/>
        <end position="226"/>
    </location>
</feature>
<feature type="domain" description="RNase III" evidence="1">
    <location>
        <begin position="6"/>
        <end position="128"/>
    </location>
</feature>
<feature type="domain" description="DRBM" evidence="1">
    <location>
        <begin position="155"/>
        <end position="225"/>
    </location>
</feature>
<feature type="active site" evidence="1">
    <location>
        <position position="45"/>
    </location>
</feature>
<feature type="active site" evidence="1">
    <location>
        <position position="117"/>
    </location>
</feature>
<feature type="binding site" evidence="1">
    <location>
        <position position="41"/>
    </location>
    <ligand>
        <name>Mg(2+)</name>
        <dbReference type="ChEBI" id="CHEBI:18420"/>
    </ligand>
</feature>
<feature type="binding site" evidence="1">
    <location>
        <position position="114"/>
    </location>
    <ligand>
        <name>Mg(2+)</name>
        <dbReference type="ChEBI" id="CHEBI:18420"/>
    </ligand>
</feature>
<feature type="binding site" evidence="1">
    <location>
        <position position="117"/>
    </location>
    <ligand>
        <name>Mg(2+)</name>
        <dbReference type="ChEBI" id="CHEBI:18420"/>
    </ligand>
</feature>